<sequence>MRPLPVAPGRLFSQLCCGPKPSASPQSKICLTMARPSSNMADFRKCFANAKHIVIISGAGVSAESGVPTFRGTGGYWRKWQAQHLATPLAFAHNPSQVWEFYHYRREVMRNKEPNPGHLAIAQCEARLRDQGRRVVVITQNIDELHRKAGTKNLLEIHGTLFKTRCTSCGNVAENYKSPICPALLGKGAPEPDTQESRIPVHKLPRCEEAGCGGLLRPHVVWFGENLDPAILKEVDRELARCDLCLVVGTSSVVYPAAMFAPQVASRGVPVAEFNMETTPATNRFRFHFPGPCGVTLPEALAPHETERIS</sequence>
<organism>
    <name type="scientific">Rattus norvegicus</name>
    <name type="common">Rat</name>
    <dbReference type="NCBI Taxonomy" id="10116"/>
    <lineage>
        <taxon>Eukaryota</taxon>
        <taxon>Metazoa</taxon>
        <taxon>Chordata</taxon>
        <taxon>Craniata</taxon>
        <taxon>Vertebrata</taxon>
        <taxon>Euteleostomi</taxon>
        <taxon>Mammalia</taxon>
        <taxon>Eutheria</taxon>
        <taxon>Euarchontoglires</taxon>
        <taxon>Glires</taxon>
        <taxon>Rodentia</taxon>
        <taxon>Myomorpha</taxon>
        <taxon>Muroidea</taxon>
        <taxon>Muridae</taxon>
        <taxon>Murinae</taxon>
        <taxon>Rattus</taxon>
    </lineage>
</organism>
<proteinExistence type="evidence at transcript level"/>
<name>SIR5_RAT</name>
<protein>
    <recommendedName>
        <fullName evidence="3">NAD-dependent protein deacylase sirtuin-5, mitochondrial</fullName>
        <ecNumber evidence="3">2.3.1.-</ecNumber>
    </recommendedName>
    <alternativeName>
        <fullName evidence="3">Regulatory protein SIR2 homolog 5</fullName>
    </alternativeName>
    <alternativeName>
        <fullName evidence="3">SIR2-like protein 5</fullName>
    </alternativeName>
</protein>
<accession>Q68FX9</accession>
<comment type="function">
    <text evidence="3">NAD-dependent lysine demalonylase, desuccinylase and deglutarylase that specifically removes malonyl, succinyl and glutaryl groups on target proteins. Activates CPS1 and contributes to the regulation of blood ammonia levels during prolonged fasting: acts by mediating desuccinylation and deglutarylation of CPS1, thereby increasing CPS1 activity in response to elevated NAD levels during fasting. Activates SOD1 by mediating its desuccinylation, leading to reduced reactive oxygen species. Activates SHMT2 by mediating its desuccinylation. Modulates ketogenesis through the desuccinylation and activation of HMGCS2. Has weak NAD-dependent protein deacetylase activity; however this activity may not be physiologically relevant in vivo. Can deacetylate cytochrome c (CYCS) and a number of other proteins in vitro such as UOX.</text>
</comment>
<comment type="catalytic activity">
    <reaction evidence="3">
        <text>N(6)-malonyl-L-lysyl-[protein] + NAD(+) + H2O = 2''-O-malonyl-ADP-D-ribose + nicotinamide + L-lysyl-[protein]</text>
        <dbReference type="Rhea" id="RHEA:47672"/>
        <dbReference type="Rhea" id="RHEA-COMP:9752"/>
        <dbReference type="Rhea" id="RHEA-COMP:11878"/>
        <dbReference type="ChEBI" id="CHEBI:15377"/>
        <dbReference type="ChEBI" id="CHEBI:17154"/>
        <dbReference type="ChEBI" id="CHEBI:29969"/>
        <dbReference type="ChEBI" id="CHEBI:57540"/>
        <dbReference type="ChEBI" id="CHEBI:87831"/>
        <dbReference type="ChEBI" id="CHEBI:87833"/>
    </reaction>
</comment>
<comment type="catalytic activity">
    <reaction evidence="3">
        <text>N(6)-succinyl-L-lysyl-[protein] + NAD(+) + H2O = 2''-O-succinyl-ADP-D-ribose + nicotinamide + L-lysyl-[protein]</text>
        <dbReference type="Rhea" id="RHEA:47668"/>
        <dbReference type="Rhea" id="RHEA-COMP:9752"/>
        <dbReference type="Rhea" id="RHEA-COMP:11877"/>
        <dbReference type="ChEBI" id="CHEBI:15377"/>
        <dbReference type="ChEBI" id="CHEBI:17154"/>
        <dbReference type="ChEBI" id="CHEBI:29969"/>
        <dbReference type="ChEBI" id="CHEBI:57540"/>
        <dbReference type="ChEBI" id="CHEBI:87830"/>
        <dbReference type="ChEBI" id="CHEBI:87832"/>
    </reaction>
</comment>
<comment type="catalytic activity">
    <reaction evidence="3">
        <text>N(6)-glutaryl-L-lysyl-[protein] + NAD(+) + H2O = 2''-O-glutaryl-ADP-D-ribose + nicotinamide + L-lysyl-[protein]</text>
        <dbReference type="Rhea" id="RHEA:47664"/>
        <dbReference type="Rhea" id="RHEA-COMP:9752"/>
        <dbReference type="Rhea" id="RHEA-COMP:11875"/>
        <dbReference type="ChEBI" id="CHEBI:15377"/>
        <dbReference type="ChEBI" id="CHEBI:17154"/>
        <dbReference type="ChEBI" id="CHEBI:29969"/>
        <dbReference type="ChEBI" id="CHEBI:57540"/>
        <dbReference type="ChEBI" id="CHEBI:87828"/>
        <dbReference type="ChEBI" id="CHEBI:87829"/>
    </reaction>
</comment>
<comment type="cofactor">
    <cofactor evidence="3">
        <name>Zn(2+)</name>
        <dbReference type="ChEBI" id="CHEBI:29105"/>
    </cofactor>
    <text evidence="3">Binds 1 zinc ion per subunit.</text>
</comment>
<comment type="subunit">
    <text evidence="1 2 3">Monomer. Homodimer. Interacts with CPS1. Interacts with PCCA (By similarity).</text>
</comment>
<comment type="subcellular location">
    <subcellularLocation>
        <location evidence="3">Mitochondrion</location>
    </subcellularLocation>
    <subcellularLocation>
        <location evidence="3">Cytoplasm</location>
        <location evidence="3">Cytosol</location>
    </subcellularLocation>
    <subcellularLocation>
        <location evidence="3">Nucleus</location>
    </subcellularLocation>
    <text evidence="3">Mainly mitochondrial. Also present extramitochondrially, with a fraction present in the cytosol and very small amounts also detected in the nucleus.</text>
</comment>
<comment type="domain">
    <text evidence="3">In contrast to class I sirtuins, class III sirtuins have only weak deacetylase activity. Difference in substrate specificity is probably due to a larger hydrophobic pocket with 2 residues (Tyr-102 and Arg-105) that bind to malonylated and succinylated substrates and define the specificity.</text>
</comment>
<comment type="similarity">
    <text evidence="3">Belongs to the sirtuin family. Class III subfamily.</text>
</comment>
<keyword id="KW-0963">Cytoplasm</keyword>
<keyword id="KW-0479">Metal-binding</keyword>
<keyword id="KW-0496">Mitochondrion</keyword>
<keyword id="KW-0520">NAD</keyword>
<keyword id="KW-0539">Nucleus</keyword>
<keyword id="KW-1185">Reference proteome</keyword>
<keyword id="KW-0808">Transferase</keyword>
<keyword id="KW-0809">Transit peptide</keyword>
<keyword id="KW-0862">Zinc</keyword>
<gene>
    <name type="primary">Sirt5</name>
</gene>
<evidence type="ECO:0000250" key="1">
    <source>
        <dbReference type="UniProtKB" id="Q8K2C6"/>
    </source>
</evidence>
<evidence type="ECO:0000250" key="2">
    <source>
        <dbReference type="UniProtKB" id="Q9NXA8"/>
    </source>
</evidence>
<evidence type="ECO:0000255" key="3">
    <source>
        <dbReference type="HAMAP-Rule" id="MF_03160"/>
    </source>
</evidence>
<evidence type="ECO:0000255" key="4">
    <source>
        <dbReference type="PROSITE-ProRule" id="PRU00236"/>
    </source>
</evidence>
<feature type="transit peptide" description="Mitochondrion" evidence="3">
    <location>
        <begin position="1"/>
        <end position="36"/>
    </location>
</feature>
<feature type="chain" id="PRO_0000260445" description="NAD-dependent protein deacylase sirtuin-5, mitochondrial">
    <location>
        <begin position="37"/>
        <end position="310"/>
    </location>
</feature>
<feature type="domain" description="Deacetylase sirtuin-type" evidence="4">
    <location>
        <begin position="37"/>
        <end position="307"/>
    </location>
</feature>
<feature type="active site" description="Proton acceptor" evidence="4">
    <location>
        <position position="158"/>
    </location>
</feature>
<feature type="binding site" evidence="3">
    <location>
        <begin position="58"/>
        <end position="77"/>
    </location>
    <ligand>
        <name>NAD(+)</name>
        <dbReference type="ChEBI" id="CHEBI:57540"/>
    </ligand>
</feature>
<feature type="binding site" evidence="3">
    <location>
        <position position="102"/>
    </location>
    <ligand>
        <name>substrate</name>
    </ligand>
</feature>
<feature type="binding site" evidence="3">
    <location>
        <position position="105"/>
    </location>
    <ligand>
        <name>substrate</name>
    </ligand>
</feature>
<feature type="binding site" evidence="3">
    <location>
        <begin position="140"/>
        <end position="143"/>
    </location>
    <ligand>
        <name>NAD(+)</name>
        <dbReference type="ChEBI" id="CHEBI:57540"/>
    </ligand>
</feature>
<feature type="binding site" evidence="3">
    <location>
        <position position="166"/>
    </location>
    <ligand>
        <name>Zn(2+)</name>
        <dbReference type="ChEBI" id="CHEBI:29105"/>
    </ligand>
</feature>
<feature type="binding site" evidence="3">
    <location>
        <position position="169"/>
    </location>
    <ligand>
        <name>Zn(2+)</name>
        <dbReference type="ChEBI" id="CHEBI:29105"/>
    </ligand>
</feature>
<feature type="binding site" evidence="3">
    <location>
        <position position="207"/>
    </location>
    <ligand>
        <name>Zn(2+)</name>
        <dbReference type="ChEBI" id="CHEBI:29105"/>
    </ligand>
</feature>
<feature type="binding site" evidence="3">
    <location>
        <position position="212"/>
    </location>
    <ligand>
        <name>Zn(2+)</name>
        <dbReference type="ChEBI" id="CHEBI:29105"/>
    </ligand>
</feature>
<feature type="binding site" evidence="3">
    <location>
        <begin position="249"/>
        <end position="251"/>
    </location>
    <ligand>
        <name>NAD(+)</name>
        <dbReference type="ChEBI" id="CHEBI:57540"/>
    </ligand>
</feature>
<feature type="binding site" evidence="3">
    <location>
        <begin position="275"/>
        <end position="277"/>
    </location>
    <ligand>
        <name>NAD(+)</name>
        <dbReference type="ChEBI" id="CHEBI:57540"/>
    </ligand>
</feature>
<feature type="binding site" evidence="3">
    <location>
        <position position="293"/>
    </location>
    <ligand>
        <name>NAD(+)</name>
        <dbReference type="ChEBI" id="CHEBI:57540"/>
    </ligand>
</feature>
<reference key="1">
    <citation type="journal article" date="2004" name="Genome Res.">
        <title>The status, quality, and expansion of the NIH full-length cDNA project: the Mammalian Gene Collection (MGC).</title>
        <authorList>
            <consortium name="The MGC Project Team"/>
        </authorList>
    </citation>
    <scope>NUCLEOTIDE SEQUENCE [LARGE SCALE MRNA]</scope>
    <source>
        <tissue>Kidney</tissue>
    </source>
</reference>
<dbReference type="EC" id="2.3.1.-" evidence="3"/>
<dbReference type="EMBL" id="BC078958">
    <property type="protein sequence ID" value="AAH78958.1"/>
    <property type="molecule type" value="mRNA"/>
</dbReference>
<dbReference type="RefSeq" id="NP_001004256.1">
    <property type="nucleotide sequence ID" value="NM_001004256.1"/>
</dbReference>
<dbReference type="RefSeq" id="XP_006253863.1">
    <property type="nucleotide sequence ID" value="XM_006253801.3"/>
</dbReference>
<dbReference type="RefSeq" id="XP_006253864.1">
    <property type="nucleotide sequence ID" value="XM_006253802.3"/>
</dbReference>
<dbReference type="RefSeq" id="XP_006253865.1">
    <property type="nucleotide sequence ID" value="XM_006253803.5"/>
</dbReference>
<dbReference type="RefSeq" id="XP_006253866.1">
    <property type="nucleotide sequence ID" value="XM_006253804.5"/>
</dbReference>
<dbReference type="RefSeq" id="XP_017456010.1">
    <property type="nucleotide sequence ID" value="XM_017600521.1"/>
</dbReference>
<dbReference type="RefSeq" id="XP_038951601.1">
    <property type="nucleotide sequence ID" value="XM_039095673.2"/>
</dbReference>
<dbReference type="SMR" id="Q68FX9"/>
<dbReference type="FunCoup" id="Q68FX9">
    <property type="interactions" value="84"/>
</dbReference>
<dbReference type="STRING" id="10116.ENSRNOP00000024067"/>
<dbReference type="iPTMnet" id="Q68FX9"/>
<dbReference type="PhosphoSitePlus" id="Q68FX9"/>
<dbReference type="jPOST" id="Q68FX9"/>
<dbReference type="PaxDb" id="10116-ENSRNOP00000024067"/>
<dbReference type="Ensembl" id="ENSRNOT00000024066.6">
    <property type="protein sequence ID" value="ENSRNOP00000024067.4"/>
    <property type="gene ID" value="ENSRNOG00000017866.6"/>
</dbReference>
<dbReference type="GeneID" id="306840"/>
<dbReference type="KEGG" id="rno:306840"/>
<dbReference type="AGR" id="RGD:1303285"/>
<dbReference type="CTD" id="23408"/>
<dbReference type="RGD" id="1303285">
    <property type="gene designation" value="Sirt5"/>
</dbReference>
<dbReference type="eggNOG" id="KOG2684">
    <property type="taxonomic scope" value="Eukaryota"/>
</dbReference>
<dbReference type="GeneTree" id="ENSGT00940000156080"/>
<dbReference type="HOGENOM" id="CLU_023643_3_1_1"/>
<dbReference type="InParanoid" id="Q68FX9"/>
<dbReference type="OMA" id="LIHMHGE"/>
<dbReference type="OrthoDB" id="424302at2759"/>
<dbReference type="PhylomeDB" id="Q68FX9"/>
<dbReference type="TreeFam" id="TF106183"/>
<dbReference type="BRENDA" id="2.3.1.B43">
    <property type="organism ID" value="5301"/>
</dbReference>
<dbReference type="Reactome" id="R-RNO-2151201">
    <property type="pathway name" value="Transcriptional activation of mitochondrial biogenesis"/>
</dbReference>
<dbReference type="PRO" id="PR:Q68FX9"/>
<dbReference type="Proteomes" id="UP000002494">
    <property type="component" value="Chromosome 17"/>
</dbReference>
<dbReference type="Bgee" id="ENSRNOG00000017866">
    <property type="expression patterns" value="Expressed in heart and 20 other cell types or tissues"/>
</dbReference>
<dbReference type="GO" id="GO:0005829">
    <property type="term" value="C:cytosol"/>
    <property type="evidence" value="ECO:0000250"/>
    <property type="project" value="UniProtKB"/>
</dbReference>
<dbReference type="GO" id="GO:0005743">
    <property type="term" value="C:mitochondrial inner membrane"/>
    <property type="evidence" value="ECO:0000266"/>
    <property type="project" value="RGD"/>
</dbReference>
<dbReference type="GO" id="GO:0005758">
    <property type="term" value="C:mitochondrial intermembrane space"/>
    <property type="evidence" value="ECO:0000250"/>
    <property type="project" value="UniProtKB"/>
</dbReference>
<dbReference type="GO" id="GO:0005759">
    <property type="term" value="C:mitochondrial matrix"/>
    <property type="evidence" value="ECO:0000250"/>
    <property type="project" value="UniProtKB"/>
</dbReference>
<dbReference type="GO" id="GO:0005739">
    <property type="term" value="C:mitochondrion"/>
    <property type="evidence" value="ECO:0000250"/>
    <property type="project" value="UniProtKB"/>
</dbReference>
<dbReference type="GO" id="GO:0005634">
    <property type="term" value="C:nucleus"/>
    <property type="evidence" value="ECO:0000318"/>
    <property type="project" value="GO_Central"/>
</dbReference>
<dbReference type="GO" id="GO:0017136">
    <property type="term" value="F:histone deacetylase activity, NAD-dependent"/>
    <property type="evidence" value="ECO:0000318"/>
    <property type="project" value="GO_Central"/>
</dbReference>
<dbReference type="GO" id="GO:0070403">
    <property type="term" value="F:NAD+ binding"/>
    <property type="evidence" value="ECO:0000250"/>
    <property type="project" value="UniProtKB"/>
</dbReference>
<dbReference type="GO" id="GO:0061697">
    <property type="term" value="F:protein-glutaryllysine deglutarylase activity"/>
    <property type="evidence" value="ECO:0000266"/>
    <property type="project" value="RGD"/>
</dbReference>
<dbReference type="GO" id="GO:0036054">
    <property type="term" value="F:protein-malonyllysine demalonylase activity"/>
    <property type="evidence" value="ECO:0000250"/>
    <property type="project" value="UniProtKB"/>
</dbReference>
<dbReference type="GO" id="GO:0036055">
    <property type="term" value="F:protein-succinyllysine desuccinylase activity"/>
    <property type="evidence" value="ECO:0000250"/>
    <property type="project" value="UniProtKB"/>
</dbReference>
<dbReference type="GO" id="GO:0008270">
    <property type="term" value="F:zinc ion binding"/>
    <property type="evidence" value="ECO:0000250"/>
    <property type="project" value="UniProtKB"/>
</dbReference>
<dbReference type="GO" id="GO:0010667">
    <property type="term" value="P:negative regulation of cardiac muscle cell apoptotic process"/>
    <property type="evidence" value="ECO:0000315"/>
    <property type="project" value="RGD"/>
</dbReference>
<dbReference type="GO" id="GO:2000378">
    <property type="term" value="P:negative regulation of reactive oxygen species metabolic process"/>
    <property type="evidence" value="ECO:0000266"/>
    <property type="project" value="RGD"/>
</dbReference>
<dbReference type="GO" id="GO:0036047">
    <property type="term" value="P:peptidyl-lysine demalonylation"/>
    <property type="evidence" value="ECO:0000250"/>
    <property type="project" value="UniProtKB"/>
</dbReference>
<dbReference type="GO" id="GO:0036049">
    <property type="term" value="P:peptidyl-lysine desuccinylation"/>
    <property type="evidence" value="ECO:0000250"/>
    <property type="project" value="UniProtKB"/>
</dbReference>
<dbReference type="GO" id="GO:0036046">
    <property type="term" value="P:protein demalonylation"/>
    <property type="evidence" value="ECO:0000250"/>
    <property type="project" value="UniProtKB"/>
</dbReference>
<dbReference type="GO" id="GO:0036048">
    <property type="term" value="P:protein desuccinylation"/>
    <property type="evidence" value="ECO:0000250"/>
    <property type="project" value="UniProtKB"/>
</dbReference>
<dbReference type="GO" id="GO:0010566">
    <property type="term" value="P:regulation of ketone biosynthetic process"/>
    <property type="evidence" value="ECO:0000250"/>
    <property type="project" value="UniProtKB"/>
</dbReference>
<dbReference type="GO" id="GO:0002931">
    <property type="term" value="P:response to ischemia"/>
    <property type="evidence" value="ECO:0000266"/>
    <property type="project" value="RGD"/>
</dbReference>
<dbReference type="GO" id="GO:0031667">
    <property type="term" value="P:response to nutrient levels"/>
    <property type="evidence" value="ECO:0000270"/>
    <property type="project" value="RGD"/>
</dbReference>
<dbReference type="CDD" id="cd01412">
    <property type="entry name" value="SIRT5_Af1_CobB"/>
    <property type="match status" value="1"/>
</dbReference>
<dbReference type="FunFam" id="3.30.1600.10:FF:000005">
    <property type="entry name" value="NAD-dependent protein deacylase sirtuin-5, mitochondrial"/>
    <property type="match status" value="1"/>
</dbReference>
<dbReference type="Gene3D" id="3.30.1600.10">
    <property type="entry name" value="SIR2/SIRT2 'Small Domain"/>
    <property type="match status" value="1"/>
</dbReference>
<dbReference type="Gene3D" id="3.40.50.1220">
    <property type="entry name" value="TPP-binding domain"/>
    <property type="match status" value="1"/>
</dbReference>
<dbReference type="HAMAP" id="MF_01121">
    <property type="entry name" value="Sirtuin_ClassIII"/>
    <property type="match status" value="1"/>
</dbReference>
<dbReference type="InterPro" id="IPR029035">
    <property type="entry name" value="DHS-like_NAD/FAD-binding_dom"/>
</dbReference>
<dbReference type="InterPro" id="IPR050134">
    <property type="entry name" value="NAD-dep_sirtuin_deacylases"/>
</dbReference>
<dbReference type="InterPro" id="IPR003000">
    <property type="entry name" value="Sirtuin"/>
</dbReference>
<dbReference type="InterPro" id="IPR026591">
    <property type="entry name" value="Sirtuin_cat_small_dom_sf"/>
</dbReference>
<dbReference type="InterPro" id="IPR027546">
    <property type="entry name" value="Sirtuin_class_III"/>
</dbReference>
<dbReference type="InterPro" id="IPR026590">
    <property type="entry name" value="Ssirtuin_cat_dom"/>
</dbReference>
<dbReference type="PANTHER" id="PTHR11085">
    <property type="entry name" value="NAD-DEPENDENT PROTEIN DEACYLASE SIRTUIN-5, MITOCHONDRIAL-RELATED"/>
    <property type="match status" value="1"/>
</dbReference>
<dbReference type="PANTHER" id="PTHR11085:SF10">
    <property type="entry name" value="NAD-DEPENDENT PROTEIN DEACYLASE SIRTUIN-5, MITOCHONDRIAL-RELATED"/>
    <property type="match status" value="1"/>
</dbReference>
<dbReference type="Pfam" id="PF02146">
    <property type="entry name" value="SIR2"/>
    <property type="match status" value="1"/>
</dbReference>
<dbReference type="SUPFAM" id="SSF52467">
    <property type="entry name" value="DHS-like NAD/FAD-binding domain"/>
    <property type="match status" value="1"/>
</dbReference>
<dbReference type="PROSITE" id="PS50305">
    <property type="entry name" value="SIRTUIN"/>
    <property type="match status" value="1"/>
</dbReference>